<dbReference type="EC" id="1.7.99.1" evidence="1"/>
<dbReference type="EMBL" id="AE016827">
    <property type="protein sequence ID" value="AAU36898.1"/>
    <property type="molecule type" value="Genomic_DNA"/>
</dbReference>
<dbReference type="RefSeq" id="WP_011199473.1">
    <property type="nucleotide sequence ID" value="NC_006300.1"/>
</dbReference>
<dbReference type="SMR" id="Q65VW2"/>
<dbReference type="STRING" id="221988.MS0291"/>
<dbReference type="KEGG" id="msu:MS0291"/>
<dbReference type="eggNOG" id="COG1151">
    <property type="taxonomic scope" value="Bacteria"/>
</dbReference>
<dbReference type="HOGENOM" id="CLU_038344_2_0_6"/>
<dbReference type="OrthoDB" id="9761526at2"/>
<dbReference type="Proteomes" id="UP000000607">
    <property type="component" value="Chromosome"/>
</dbReference>
<dbReference type="GO" id="GO:0005737">
    <property type="term" value="C:cytoplasm"/>
    <property type="evidence" value="ECO:0007669"/>
    <property type="project" value="UniProtKB-SubCell"/>
</dbReference>
<dbReference type="GO" id="GO:0051537">
    <property type="term" value="F:2 iron, 2 sulfur cluster binding"/>
    <property type="evidence" value="ECO:0007669"/>
    <property type="project" value="UniProtKB-KW"/>
</dbReference>
<dbReference type="GO" id="GO:0050418">
    <property type="term" value="F:hydroxylamine reductase activity"/>
    <property type="evidence" value="ECO:0007669"/>
    <property type="project" value="UniProtKB-UniRule"/>
</dbReference>
<dbReference type="GO" id="GO:0046872">
    <property type="term" value="F:metal ion binding"/>
    <property type="evidence" value="ECO:0007669"/>
    <property type="project" value="UniProtKB-KW"/>
</dbReference>
<dbReference type="GO" id="GO:0004601">
    <property type="term" value="F:peroxidase activity"/>
    <property type="evidence" value="ECO:0007669"/>
    <property type="project" value="TreeGrafter"/>
</dbReference>
<dbReference type="GO" id="GO:0042542">
    <property type="term" value="P:response to hydrogen peroxide"/>
    <property type="evidence" value="ECO:0007669"/>
    <property type="project" value="TreeGrafter"/>
</dbReference>
<dbReference type="FunFam" id="1.20.1270.20:FF:000001">
    <property type="entry name" value="Hydroxylamine reductase"/>
    <property type="match status" value="1"/>
</dbReference>
<dbReference type="FunFam" id="1.20.1270.20:FF:000002">
    <property type="entry name" value="Hydroxylamine reductase"/>
    <property type="match status" value="1"/>
</dbReference>
<dbReference type="FunFam" id="3.40.50.2030:FF:000001">
    <property type="entry name" value="Hydroxylamine reductase"/>
    <property type="match status" value="1"/>
</dbReference>
<dbReference type="FunFam" id="3.40.50.2030:FF:000002">
    <property type="entry name" value="Hydroxylamine reductase"/>
    <property type="match status" value="1"/>
</dbReference>
<dbReference type="Gene3D" id="1.20.1270.20">
    <property type="match status" value="2"/>
</dbReference>
<dbReference type="Gene3D" id="3.40.50.2030">
    <property type="match status" value="2"/>
</dbReference>
<dbReference type="HAMAP" id="MF_00069">
    <property type="entry name" value="Hydroxylam_reduct"/>
    <property type="match status" value="1"/>
</dbReference>
<dbReference type="InterPro" id="IPR004137">
    <property type="entry name" value="HCP/CODH"/>
</dbReference>
<dbReference type="InterPro" id="IPR010048">
    <property type="entry name" value="Hydroxylam_reduct"/>
</dbReference>
<dbReference type="InterPro" id="IPR016099">
    <property type="entry name" value="Prismane-like_a/b-sand"/>
</dbReference>
<dbReference type="InterPro" id="IPR011254">
    <property type="entry name" value="Prismane-like_sf"/>
</dbReference>
<dbReference type="InterPro" id="IPR016100">
    <property type="entry name" value="Prismane_a-bundle"/>
</dbReference>
<dbReference type="NCBIfam" id="TIGR01703">
    <property type="entry name" value="hybrid_clust"/>
    <property type="match status" value="1"/>
</dbReference>
<dbReference type="NCBIfam" id="NF003658">
    <property type="entry name" value="PRK05290.1"/>
    <property type="match status" value="1"/>
</dbReference>
<dbReference type="PANTHER" id="PTHR30109">
    <property type="entry name" value="HYDROXYLAMINE REDUCTASE"/>
    <property type="match status" value="1"/>
</dbReference>
<dbReference type="PANTHER" id="PTHR30109:SF0">
    <property type="entry name" value="HYDROXYLAMINE REDUCTASE"/>
    <property type="match status" value="1"/>
</dbReference>
<dbReference type="Pfam" id="PF03063">
    <property type="entry name" value="Prismane"/>
    <property type="match status" value="1"/>
</dbReference>
<dbReference type="PIRSF" id="PIRSF000076">
    <property type="entry name" value="HCP"/>
    <property type="match status" value="1"/>
</dbReference>
<dbReference type="SUPFAM" id="SSF56821">
    <property type="entry name" value="Prismane protein-like"/>
    <property type="match status" value="1"/>
</dbReference>
<comment type="function">
    <text evidence="1">Catalyzes the reduction of hydroxylamine to form NH(3) and H(2)O.</text>
</comment>
<comment type="catalytic activity">
    <reaction evidence="1">
        <text>A + NH4(+) + H2O = hydroxylamine + AH2 + H(+)</text>
        <dbReference type="Rhea" id="RHEA:22052"/>
        <dbReference type="ChEBI" id="CHEBI:13193"/>
        <dbReference type="ChEBI" id="CHEBI:15377"/>
        <dbReference type="ChEBI" id="CHEBI:15378"/>
        <dbReference type="ChEBI" id="CHEBI:15429"/>
        <dbReference type="ChEBI" id="CHEBI:17499"/>
        <dbReference type="ChEBI" id="CHEBI:28938"/>
        <dbReference type="EC" id="1.7.99.1"/>
    </reaction>
</comment>
<comment type="cofactor">
    <cofactor evidence="1">
        <name>[2Fe-2S] cluster</name>
        <dbReference type="ChEBI" id="CHEBI:190135"/>
    </cofactor>
    <text evidence="1">Binds 1 [2Fe-2S] cluster.</text>
</comment>
<comment type="cofactor">
    <cofactor evidence="1">
        <name>hybrid [4Fe-2O-2S] cluster</name>
        <dbReference type="ChEBI" id="CHEBI:60519"/>
    </cofactor>
    <text evidence="1">Binds 1 hybrid [4Fe-2O-2S] cluster.</text>
</comment>
<comment type="subcellular location">
    <subcellularLocation>
        <location evidence="1">Cytoplasm</location>
    </subcellularLocation>
</comment>
<comment type="similarity">
    <text evidence="1">Belongs to the HCP family.</text>
</comment>
<reference key="1">
    <citation type="journal article" date="2004" name="Nat. Biotechnol.">
        <title>The genome sequence of the capnophilic rumen bacterium Mannheimia succiniciproducens.</title>
        <authorList>
            <person name="Hong S.H."/>
            <person name="Kim J.S."/>
            <person name="Lee S.Y."/>
            <person name="In Y.H."/>
            <person name="Choi S.S."/>
            <person name="Rih J.-K."/>
            <person name="Kim C.H."/>
            <person name="Jeong H."/>
            <person name="Hur C.G."/>
            <person name="Kim J.J."/>
        </authorList>
    </citation>
    <scope>NUCLEOTIDE SEQUENCE [LARGE SCALE GENOMIC DNA]</scope>
    <source>
        <strain>KCTC 0769BP / MBEL55E</strain>
    </source>
</reference>
<gene>
    <name evidence="1" type="primary">hcp</name>
    <name type="ordered locus">MS0291</name>
</gene>
<accession>Q65VW2</accession>
<sequence length="553" mass="60851">MYCVQCEQTMVTPKGNGCSFSQGMCGKTAETSDLQDLLIATLHSLSAWALKAREHNIIIHEADAFAPRAFFATLTNVNFDSARIAGYAQQALIYRNQLIKAVNEVEPNPNIDHPLANIELNGISVEQLALQAKQFALDTDRQQIGEEAHGVRLLCLYGLKGAAAYMEHAYVLDKFDNDIYAEYHGFMSWLGTQPGDLNELLEKALAIGSMNFKVMAMLDAGETEHFGNPVPAMVNVRPVKGKCILISGHDLKDLKELLEQTEGKGINVYTHGEMLPAHGYPELKKYKHLVGNFGSGWQNQQKEFARFPGAIVMTSNCLIDPNVGDYADRIFTRNIVGWPGVTHLEDHDFSPVIEKALQCDGFPYTELEHLITVGFGRKTLIDASDAVIDLVKAGKLSHVFVIGGCDGDKEERHYYTDLAYALPKDTAVLTLGCGKYRFNKLDFGTIDGGLPRLLDAGQCNDTYSAIMLAVTLSQKLGIGLNELPLSIVLSWFEQKAIIVLLTLLALGVKNVYSGPSKPAFLNDNVMALLHEKFGLSGLTTPEQDFGHIINKNL</sequence>
<name>HCP_MANSM</name>
<evidence type="ECO:0000255" key="1">
    <source>
        <dbReference type="HAMAP-Rule" id="MF_00069"/>
    </source>
</evidence>
<organism>
    <name type="scientific">Mannheimia succiniciproducens (strain KCTC 0769BP / MBEL55E)</name>
    <dbReference type="NCBI Taxonomy" id="221988"/>
    <lineage>
        <taxon>Bacteria</taxon>
        <taxon>Pseudomonadati</taxon>
        <taxon>Pseudomonadota</taxon>
        <taxon>Gammaproteobacteria</taxon>
        <taxon>Pasteurellales</taxon>
        <taxon>Pasteurellaceae</taxon>
        <taxon>Basfia</taxon>
    </lineage>
</organism>
<feature type="chain" id="PRO_1000009156" description="Hydroxylamine reductase">
    <location>
        <begin position="1"/>
        <end position="553"/>
    </location>
</feature>
<feature type="binding site" evidence="1">
    <location>
        <position position="3"/>
    </location>
    <ligand>
        <name>[2Fe-2S] cluster</name>
        <dbReference type="ChEBI" id="CHEBI:190135"/>
    </ligand>
</feature>
<feature type="binding site" evidence="1">
    <location>
        <position position="6"/>
    </location>
    <ligand>
        <name>[2Fe-2S] cluster</name>
        <dbReference type="ChEBI" id="CHEBI:190135"/>
    </ligand>
</feature>
<feature type="binding site" evidence="1">
    <location>
        <position position="18"/>
    </location>
    <ligand>
        <name>[2Fe-2S] cluster</name>
        <dbReference type="ChEBI" id="CHEBI:190135"/>
    </ligand>
</feature>
<feature type="binding site" evidence="1">
    <location>
        <position position="25"/>
    </location>
    <ligand>
        <name>[2Fe-2S] cluster</name>
        <dbReference type="ChEBI" id="CHEBI:190135"/>
    </ligand>
</feature>
<feature type="binding site" evidence="1">
    <location>
        <position position="249"/>
    </location>
    <ligand>
        <name>hybrid [4Fe-2O-2S] cluster</name>
        <dbReference type="ChEBI" id="CHEBI:60519"/>
    </ligand>
</feature>
<feature type="binding site" evidence="1">
    <location>
        <position position="273"/>
    </location>
    <ligand>
        <name>hybrid [4Fe-2O-2S] cluster</name>
        <dbReference type="ChEBI" id="CHEBI:60519"/>
    </ligand>
</feature>
<feature type="binding site" evidence="1">
    <location>
        <position position="317"/>
    </location>
    <ligand>
        <name>hybrid [4Fe-2O-2S] cluster</name>
        <dbReference type="ChEBI" id="CHEBI:60519"/>
    </ligand>
</feature>
<feature type="binding site" description="via persulfide group" evidence="1">
    <location>
        <position position="405"/>
    </location>
    <ligand>
        <name>hybrid [4Fe-2O-2S] cluster</name>
        <dbReference type="ChEBI" id="CHEBI:60519"/>
    </ligand>
</feature>
<feature type="binding site" evidence="1">
    <location>
        <position position="433"/>
    </location>
    <ligand>
        <name>hybrid [4Fe-2O-2S] cluster</name>
        <dbReference type="ChEBI" id="CHEBI:60519"/>
    </ligand>
</feature>
<feature type="binding site" evidence="1">
    <location>
        <position position="459"/>
    </location>
    <ligand>
        <name>hybrid [4Fe-2O-2S] cluster</name>
        <dbReference type="ChEBI" id="CHEBI:60519"/>
    </ligand>
</feature>
<feature type="binding site" evidence="1">
    <location>
        <position position="493"/>
    </location>
    <ligand>
        <name>hybrid [4Fe-2O-2S] cluster</name>
        <dbReference type="ChEBI" id="CHEBI:60519"/>
    </ligand>
</feature>
<feature type="binding site" evidence="1">
    <location>
        <position position="495"/>
    </location>
    <ligand>
        <name>hybrid [4Fe-2O-2S] cluster</name>
        <dbReference type="ChEBI" id="CHEBI:60519"/>
    </ligand>
</feature>
<feature type="modified residue" description="Cysteine persulfide" evidence="1">
    <location>
        <position position="405"/>
    </location>
</feature>
<keyword id="KW-0001">2Fe-2S</keyword>
<keyword id="KW-0963">Cytoplasm</keyword>
<keyword id="KW-0408">Iron</keyword>
<keyword id="KW-0411">Iron-sulfur</keyword>
<keyword id="KW-0479">Metal-binding</keyword>
<keyword id="KW-0560">Oxidoreductase</keyword>
<protein>
    <recommendedName>
        <fullName evidence="1">Hydroxylamine reductase</fullName>
        <ecNumber evidence="1">1.7.99.1</ecNumber>
    </recommendedName>
    <alternativeName>
        <fullName evidence="1">Hybrid-cluster protein</fullName>
        <shortName evidence="1">HCP</shortName>
    </alternativeName>
    <alternativeName>
        <fullName evidence="1">Prismane protein</fullName>
    </alternativeName>
</protein>
<proteinExistence type="inferred from homology"/>